<organism>
    <name type="scientific">Paraburkholderia xenovorans (strain LB400)</name>
    <dbReference type="NCBI Taxonomy" id="266265"/>
    <lineage>
        <taxon>Bacteria</taxon>
        <taxon>Pseudomonadati</taxon>
        <taxon>Pseudomonadota</taxon>
        <taxon>Betaproteobacteria</taxon>
        <taxon>Burkholderiales</taxon>
        <taxon>Burkholderiaceae</taxon>
        <taxon>Paraburkholderia</taxon>
    </lineage>
</organism>
<evidence type="ECO:0000255" key="1">
    <source>
        <dbReference type="HAMAP-Rule" id="MF_01639"/>
    </source>
</evidence>
<evidence type="ECO:0007829" key="2">
    <source>
        <dbReference type="PDB" id="5TRW"/>
    </source>
</evidence>
<proteinExistence type="evidence at protein level"/>
<protein>
    <recommendedName>
        <fullName evidence="1">Pyridoxal kinase PdxY</fullName>
        <shortName evidence="1">PL kinase</shortName>
        <ecNumber evidence="1">2.7.1.35</ecNumber>
    </recommendedName>
</protein>
<name>PDXY_PARXL</name>
<accession>Q141E8</accession>
<comment type="function">
    <text evidence="1">Pyridoxal kinase involved in the salvage pathway of pyridoxal 5'-phosphate (PLP). Catalyzes the phosphorylation of pyridoxal to PLP.</text>
</comment>
<comment type="catalytic activity">
    <reaction evidence="1">
        <text>pyridoxal + ATP = pyridoxal 5'-phosphate + ADP + H(+)</text>
        <dbReference type="Rhea" id="RHEA:10224"/>
        <dbReference type="ChEBI" id="CHEBI:15378"/>
        <dbReference type="ChEBI" id="CHEBI:17310"/>
        <dbReference type="ChEBI" id="CHEBI:30616"/>
        <dbReference type="ChEBI" id="CHEBI:456216"/>
        <dbReference type="ChEBI" id="CHEBI:597326"/>
        <dbReference type="EC" id="2.7.1.35"/>
    </reaction>
</comment>
<comment type="cofactor">
    <cofactor evidence="1">
        <name>Mg(2+)</name>
        <dbReference type="ChEBI" id="CHEBI:18420"/>
    </cofactor>
</comment>
<comment type="pathway">
    <text evidence="1">Cofactor metabolism; pyridoxal 5'-phosphate salvage; pyridoxal 5'-phosphate from pyridoxal: step 1/1.</text>
</comment>
<comment type="subunit">
    <text evidence="1">Homodimer.</text>
</comment>
<comment type="similarity">
    <text evidence="1">Belongs to the pyridoxine kinase family. PdxY subfamily.</text>
</comment>
<dbReference type="EC" id="2.7.1.35" evidence="1"/>
<dbReference type="EMBL" id="CP000270">
    <property type="protein sequence ID" value="ABE30041.1"/>
    <property type="molecule type" value="Genomic_DNA"/>
</dbReference>
<dbReference type="RefSeq" id="WP_011487752.1">
    <property type="nucleotide sequence ID" value="NC_007951.1"/>
</dbReference>
<dbReference type="PDB" id="5TRW">
    <property type="method" value="X-ray"/>
    <property type="resolution" value="1.60 A"/>
    <property type="chains" value="A=1-288"/>
</dbReference>
<dbReference type="PDBsum" id="5TRW"/>
<dbReference type="SMR" id="Q141E8"/>
<dbReference type="STRING" id="266265.Bxe_A2936"/>
<dbReference type="KEGG" id="bxb:DR64_617"/>
<dbReference type="KEGG" id="bxe:Bxe_A2936"/>
<dbReference type="PATRIC" id="fig|266265.5.peg.1551"/>
<dbReference type="eggNOG" id="COG2240">
    <property type="taxonomic scope" value="Bacteria"/>
</dbReference>
<dbReference type="OrthoDB" id="9800808at2"/>
<dbReference type="UniPathway" id="UPA01068">
    <property type="reaction ID" value="UER00298"/>
</dbReference>
<dbReference type="Proteomes" id="UP000001817">
    <property type="component" value="Chromosome 1"/>
</dbReference>
<dbReference type="GO" id="GO:0005829">
    <property type="term" value="C:cytosol"/>
    <property type="evidence" value="ECO:0007669"/>
    <property type="project" value="TreeGrafter"/>
</dbReference>
<dbReference type="GO" id="GO:0005524">
    <property type="term" value="F:ATP binding"/>
    <property type="evidence" value="ECO:0007669"/>
    <property type="project" value="UniProtKB-UniRule"/>
</dbReference>
<dbReference type="GO" id="GO:0000287">
    <property type="term" value="F:magnesium ion binding"/>
    <property type="evidence" value="ECO:0007669"/>
    <property type="project" value="UniProtKB-UniRule"/>
</dbReference>
<dbReference type="GO" id="GO:0008478">
    <property type="term" value="F:pyridoxal kinase activity"/>
    <property type="evidence" value="ECO:0007669"/>
    <property type="project" value="UniProtKB-UniRule"/>
</dbReference>
<dbReference type="GO" id="GO:0009443">
    <property type="term" value="P:pyridoxal 5'-phosphate salvage"/>
    <property type="evidence" value="ECO:0007669"/>
    <property type="project" value="UniProtKB-UniRule"/>
</dbReference>
<dbReference type="CDD" id="cd01173">
    <property type="entry name" value="pyridoxal_pyridoxamine_kinase"/>
    <property type="match status" value="1"/>
</dbReference>
<dbReference type="FunFam" id="3.40.1190.20:FF:000008">
    <property type="entry name" value="Pyridoxal kinase PdxY"/>
    <property type="match status" value="1"/>
</dbReference>
<dbReference type="Gene3D" id="3.40.1190.20">
    <property type="match status" value="1"/>
</dbReference>
<dbReference type="HAMAP" id="MF_01639">
    <property type="entry name" value="PdxY"/>
    <property type="match status" value="1"/>
</dbReference>
<dbReference type="InterPro" id="IPR013749">
    <property type="entry name" value="PM/HMP-P_kinase-1"/>
</dbReference>
<dbReference type="InterPro" id="IPR004625">
    <property type="entry name" value="PyrdxlKinase"/>
</dbReference>
<dbReference type="InterPro" id="IPR023685">
    <property type="entry name" value="Pyridoxal_kinase_PdxY"/>
</dbReference>
<dbReference type="InterPro" id="IPR029056">
    <property type="entry name" value="Ribokinase-like"/>
</dbReference>
<dbReference type="NCBIfam" id="NF004398">
    <property type="entry name" value="PRK05756.1"/>
    <property type="match status" value="1"/>
</dbReference>
<dbReference type="NCBIfam" id="TIGR00687">
    <property type="entry name" value="pyridox_kin"/>
    <property type="match status" value="1"/>
</dbReference>
<dbReference type="PANTHER" id="PTHR10534">
    <property type="entry name" value="PYRIDOXAL KINASE"/>
    <property type="match status" value="1"/>
</dbReference>
<dbReference type="PANTHER" id="PTHR10534:SF2">
    <property type="entry name" value="PYRIDOXAL KINASE"/>
    <property type="match status" value="1"/>
</dbReference>
<dbReference type="Pfam" id="PF08543">
    <property type="entry name" value="Phos_pyr_kin"/>
    <property type="match status" value="1"/>
</dbReference>
<dbReference type="SUPFAM" id="SSF53613">
    <property type="entry name" value="Ribokinase-like"/>
    <property type="match status" value="1"/>
</dbReference>
<gene>
    <name evidence="1" type="primary">pdxY</name>
    <name type="ordered locus">Bxeno_A1503</name>
    <name type="ORF">Bxe_A2936</name>
</gene>
<feature type="chain" id="PRO_0000269802" description="Pyridoxal kinase PdxY">
    <location>
        <begin position="1"/>
        <end position="288"/>
    </location>
</feature>
<feature type="binding site" evidence="1">
    <location>
        <position position="10"/>
    </location>
    <ligand>
        <name>substrate</name>
    </ligand>
</feature>
<feature type="binding site" evidence="1">
    <location>
        <begin position="45"/>
        <end position="46"/>
    </location>
    <ligand>
        <name>substrate</name>
    </ligand>
</feature>
<feature type="binding site" evidence="1">
    <location>
        <position position="112"/>
    </location>
    <ligand>
        <name>ATP</name>
        <dbReference type="ChEBI" id="CHEBI:30616"/>
    </ligand>
</feature>
<feature type="binding site" evidence="1">
    <location>
        <position position="143"/>
    </location>
    <ligand>
        <name>ATP</name>
        <dbReference type="ChEBI" id="CHEBI:30616"/>
    </ligand>
</feature>
<feature type="binding site" evidence="1">
    <location>
        <position position="148"/>
    </location>
    <ligand>
        <name>ATP</name>
        <dbReference type="ChEBI" id="CHEBI:30616"/>
    </ligand>
</feature>
<feature type="binding site" evidence="1">
    <location>
        <position position="181"/>
    </location>
    <ligand>
        <name>ATP</name>
        <dbReference type="ChEBI" id="CHEBI:30616"/>
    </ligand>
</feature>
<feature type="binding site" evidence="1">
    <location>
        <position position="222"/>
    </location>
    <ligand>
        <name>substrate</name>
    </ligand>
</feature>
<feature type="strand" evidence="2">
    <location>
        <begin position="4"/>
        <end position="15"/>
    </location>
</feature>
<feature type="helix" evidence="2">
    <location>
        <begin position="19"/>
        <end position="29"/>
    </location>
</feature>
<feature type="strand" evidence="2">
    <location>
        <begin position="32"/>
        <end position="43"/>
    </location>
</feature>
<feature type="helix" evidence="2">
    <location>
        <begin position="45"/>
        <end position="47"/>
    </location>
</feature>
<feature type="strand" evidence="2">
    <location>
        <begin position="52"/>
        <end position="54"/>
    </location>
</feature>
<feature type="helix" evidence="2">
    <location>
        <begin position="57"/>
        <end position="69"/>
    </location>
</feature>
<feature type="helix" evidence="2">
    <location>
        <begin position="73"/>
        <end position="75"/>
    </location>
</feature>
<feature type="strand" evidence="2">
    <location>
        <begin position="78"/>
        <end position="81"/>
    </location>
</feature>
<feature type="helix" evidence="2">
    <location>
        <begin position="87"/>
        <end position="103"/>
    </location>
</feature>
<feature type="strand" evidence="2">
    <location>
        <begin position="108"/>
        <end position="111"/>
    </location>
</feature>
<feature type="helix" evidence="2">
    <location>
        <begin position="127"/>
        <end position="133"/>
    </location>
</feature>
<feature type="helix" evidence="2">
    <location>
        <begin position="135"/>
        <end position="137"/>
    </location>
</feature>
<feature type="strand" evidence="2">
    <location>
        <begin position="140"/>
        <end position="142"/>
    </location>
</feature>
<feature type="helix" evidence="2">
    <location>
        <begin position="146"/>
        <end position="153"/>
    </location>
</feature>
<feature type="helix" evidence="2">
    <location>
        <begin position="160"/>
        <end position="171"/>
    </location>
</feature>
<feature type="strand" evidence="2">
    <location>
        <begin position="176"/>
        <end position="183"/>
    </location>
</feature>
<feature type="strand" evidence="2">
    <location>
        <begin position="192"/>
        <end position="201"/>
    </location>
</feature>
<feature type="strand" evidence="2">
    <location>
        <begin position="203"/>
        <end position="209"/>
    </location>
</feature>
<feature type="helix" evidence="2">
    <location>
        <begin position="220"/>
        <end position="233"/>
    </location>
</feature>
<feature type="helix" evidence="2">
    <location>
        <begin position="238"/>
        <end position="258"/>
    </location>
</feature>
<feature type="turn" evidence="2">
    <location>
        <begin position="266"/>
        <end position="269"/>
    </location>
</feature>
<feature type="helix" evidence="2">
    <location>
        <begin position="270"/>
        <end position="274"/>
    </location>
</feature>
<sequence length="288" mass="31403">MTKNVLSIQSHVVFGHAGNSAAVFPMRRLGVNVWPLNTVQFSNHTQYGHWTGGAIDATQMVELVDGIGAIGMLPRCDAVLSGYLGTPEQAQSVLEIVKAVKAANPRAWYFCDPVMGAVSGCKVEPGIQEFLVRTMPGVADAMAPNHTELQRLVGREIETLEEAVTACRELIARGPKLVLVKHLLDRNSPADRFNMLVVTEREAWMGQRPLYPFARQPVGVGDLTSAVFVARTLLGDSIRAAFEHTLAAVNAVVKATWQAGRYELELVAAQSEIAQPREWFDAWVGDTA</sequence>
<keyword id="KW-0002">3D-structure</keyword>
<keyword id="KW-0067">ATP-binding</keyword>
<keyword id="KW-0418">Kinase</keyword>
<keyword id="KW-0460">Magnesium</keyword>
<keyword id="KW-0547">Nucleotide-binding</keyword>
<keyword id="KW-1185">Reference proteome</keyword>
<keyword id="KW-0808">Transferase</keyword>
<reference key="1">
    <citation type="journal article" date="2006" name="Proc. Natl. Acad. Sci. U.S.A.">
        <title>Burkholderia xenovorans LB400 harbors a multi-replicon, 9.73-Mbp genome shaped for versatility.</title>
        <authorList>
            <person name="Chain P.S.G."/>
            <person name="Denef V.J."/>
            <person name="Konstantinidis K.T."/>
            <person name="Vergez L.M."/>
            <person name="Agullo L."/>
            <person name="Reyes V.L."/>
            <person name="Hauser L."/>
            <person name="Cordova M."/>
            <person name="Gomez L."/>
            <person name="Gonzalez M."/>
            <person name="Land M."/>
            <person name="Lao V."/>
            <person name="Larimer F."/>
            <person name="LiPuma J.J."/>
            <person name="Mahenthiralingam E."/>
            <person name="Malfatti S.A."/>
            <person name="Marx C.J."/>
            <person name="Parnell J.J."/>
            <person name="Ramette A."/>
            <person name="Richardson P."/>
            <person name="Seeger M."/>
            <person name="Smith D."/>
            <person name="Spilker T."/>
            <person name="Sul W.J."/>
            <person name="Tsoi T.V."/>
            <person name="Ulrich L.E."/>
            <person name="Zhulin I.B."/>
            <person name="Tiedje J.M."/>
        </authorList>
    </citation>
    <scope>NUCLEOTIDE SEQUENCE [LARGE SCALE GENOMIC DNA]</scope>
    <source>
        <strain>LB400</strain>
    </source>
</reference>